<evidence type="ECO:0000255" key="1">
    <source>
        <dbReference type="HAMAP-Rule" id="MF_01515"/>
    </source>
</evidence>
<dbReference type="EMBL" id="AE017355">
    <property type="protein sequence ID" value="AAT61697.1"/>
    <property type="molecule type" value="Genomic_DNA"/>
</dbReference>
<dbReference type="RefSeq" id="WP_000938435.1">
    <property type="nucleotide sequence ID" value="NC_005957.1"/>
</dbReference>
<dbReference type="RefSeq" id="YP_037477.1">
    <property type="nucleotide sequence ID" value="NC_005957.1"/>
</dbReference>
<dbReference type="SMR" id="Q6HG49"/>
<dbReference type="KEGG" id="btk:BT9727_3154"/>
<dbReference type="PATRIC" id="fig|281309.8.peg.3358"/>
<dbReference type="HOGENOM" id="CLU_106166_1_1_9"/>
<dbReference type="Proteomes" id="UP000001301">
    <property type="component" value="Chromosome"/>
</dbReference>
<dbReference type="GO" id="GO:0005886">
    <property type="term" value="C:plasma membrane"/>
    <property type="evidence" value="ECO:0007669"/>
    <property type="project" value="UniProtKB-SubCell"/>
</dbReference>
<dbReference type="CDD" id="cd16381">
    <property type="entry name" value="YitT_C_like_1"/>
    <property type="match status" value="1"/>
</dbReference>
<dbReference type="HAMAP" id="MF_01515">
    <property type="entry name" value="UPF0316"/>
    <property type="match status" value="1"/>
</dbReference>
<dbReference type="InterPro" id="IPR019264">
    <property type="entry name" value="DUF2179"/>
</dbReference>
<dbReference type="InterPro" id="IPR044035">
    <property type="entry name" value="DUF5698"/>
</dbReference>
<dbReference type="InterPro" id="IPR022930">
    <property type="entry name" value="UPF0316"/>
</dbReference>
<dbReference type="NCBIfam" id="NF003193">
    <property type="entry name" value="PRK04164.1-4"/>
    <property type="match status" value="1"/>
</dbReference>
<dbReference type="NCBIfam" id="NF003194">
    <property type="entry name" value="PRK04164.1-5"/>
    <property type="match status" value="1"/>
</dbReference>
<dbReference type="PANTHER" id="PTHR40060">
    <property type="entry name" value="UPF0316 PROTEIN YEBE"/>
    <property type="match status" value="1"/>
</dbReference>
<dbReference type="PANTHER" id="PTHR40060:SF1">
    <property type="entry name" value="UPF0316 PROTEIN YEBE"/>
    <property type="match status" value="1"/>
</dbReference>
<dbReference type="Pfam" id="PF10035">
    <property type="entry name" value="DUF2179"/>
    <property type="match status" value="1"/>
</dbReference>
<dbReference type="Pfam" id="PF18955">
    <property type="entry name" value="DUF5698"/>
    <property type="match status" value="1"/>
</dbReference>
<proteinExistence type="inferred from homology"/>
<accession>Q6HG49</accession>
<keyword id="KW-1003">Cell membrane</keyword>
<keyword id="KW-0472">Membrane</keyword>
<keyword id="KW-0812">Transmembrane</keyword>
<keyword id="KW-1133">Transmembrane helix</keyword>
<name>Y3154_BACHK</name>
<sequence>MLQALLIFVLQIIYVPILTIRTILLVKNQTRSAAAVGLLEGAIYIVSLGIVFQDLSNWMNIVAYVIGFSAGLLLGGYIENKLAIGYITYQVSLLDRCNELVDELRHSGFGVTVFEGEGINSIRYRLDIVAKRSREKELLEIINEIAPKAFMSSYEIRSFKGGYLTKAMKKRALMKKKDHHVS</sequence>
<comment type="subcellular location">
    <subcellularLocation>
        <location evidence="1">Cell membrane</location>
        <topology evidence="1">Multi-pass membrane protein</topology>
    </subcellularLocation>
</comment>
<comment type="similarity">
    <text evidence="1">Belongs to the UPF0316 family.</text>
</comment>
<feature type="chain" id="PRO_0000171937" description="UPF0316 protein BT9727_3154">
    <location>
        <begin position="1"/>
        <end position="182"/>
    </location>
</feature>
<feature type="transmembrane region" description="Helical" evidence="1">
    <location>
        <begin position="6"/>
        <end position="26"/>
    </location>
</feature>
<feature type="transmembrane region" description="Helical" evidence="1">
    <location>
        <begin position="32"/>
        <end position="52"/>
    </location>
</feature>
<feature type="transmembrane region" description="Helical" evidence="1">
    <location>
        <begin position="58"/>
        <end position="78"/>
    </location>
</feature>
<reference key="1">
    <citation type="journal article" date="2006" name="J. Bacteriol.">
        <title>Pathogenomic sequence analysis of Bacillus cereus and Bacillus thuringiensis isolates closely related to Bacillus anthracis.</title>
        <authorList>
            <person name="Han C.S."/>
            <person name="Xie G."/>
            <person name="Challacombe J.F."/>
            <person name="Altherr M.R."/>
            <person name="Bhotika S.S."/>
            <person name="Bruce D."/>
            <person name="Campbell C.S."/>
            <person name="Campbell M.L."/>
            <person name="Chen J."/>
            <person name="Chertkov O."/>
            <person name="Cleland C."/>
            <person name="Dimitrijevic M."/>
            <person name="Doggett N.A."/>
            <person name="Fawcett J.J."/>
            <person name="Glavina T."/>
            <person name="Goodwin L.A."/>
            <person name="Hill K.K."/>
            <person name="Hitchcock P."/>
            <person name="Jackson P.J."/>
            <person name="Keim P."/>
            <person name="Kewalramani A.R."/>
            <person name="Longmire J."/>
            <person name="Lucas S."/>
            <person name="Malfatti S."/>
            <person name="McMurry K."/>
            <person name="Meincke L.J."/>
            <person name="Misra M."/>
            <person name="Moseman B.L."/>
            <person name="Mundt M."/>
            <person name="Munk A.C."/>
            <person name="Okinaka R.T."/>
            <person name="Parson-Quintana B."/>
            <person name="Reilly L.P."/>
            <person name="Richardson P."/>
            <person name="Robinson D.L."/>
            <person name="Rubin E."/>
            <person name="Saunders E."/>
            <person name="Tapia R."/>
            <person name="Tesmer J.G."/>
            <person name="Thayer N."/>
            <person name="Thompson L.S."/>
            <person name="Tice H."/>
            <person name="Ticknor L.O."/>
            <person name="Wills P.L."/>
            <person name="Brettin T.S."/>
            <person name="Gilna P."/>
        </authorList>
    </citation>
    <scope>NUCLEOTIDE SEQUENCE [LARGE SCALE GENOMIC DNA]</scope>
    <source>
        <strain>97-27</strain>
    </source>
</reference>
<protein>
    <recommendedName>
        <fullName evidence="1">UPF0316 protein BT9727_3154</fullName>
    </recommendedName>
</protein>
<organism>
    <name type="scientific">Bacillus thuringiensis subsp. konkukian (strain 97-27)</name>
    <dbReference type="NCBI Taxonomy" id="281309"/>
    <lineage>
        <taxon>Bacteria</taxon>
        <taxon>Bacillati</taxon>
        <taxon>Bacillota</taxon>
        <taxon>Bacilli</taxon>
        <taxon>Bacillales</taxon>
        <taxon>Bacillaceae</taxon>
        <taxon>Bacillus</taxon>
        <taxon>Bacillus cereus group</taxon>
    </lineage>
</organism>
<gene>
    <name type="ordered locus">BT9727_3154</name>
</gene>